<sequence length="348" mass="38165">MSPYVTMILISSLGLGTTITFTSSSWLMAWMGLEINTLAITPLMVKQHHPRATEATTKYFLTQATASGLLLFATLNNAWMTGEWNTMELSNNLSAPMITMALALKMGVAPMHFWLPEVLQGLPLLTGLILSTWQKLAPFTLLYMTSHELNTTTMTILGLTSTIIGGLGGLNQTQLRKVLAYSSIAHLGWMVIIIQYSKTLALLNLLLYITMTSTAFLTLMTLSATKINTLSTKWATTPIATMTAMLALLALGGLPPLTGFMPKWLILQELTKQNLPALATLMALSALLSLFFYLRMCHTMTLTISPNTNNNMITWRKKPGQKALPLAMLSIMTLMALPTTPTMVAIMN</sequence>
<proteinExistence type="inferred from homology"/>
<protein>
    <recommendedName>
        <fullName>NADH-ubiquinone oxidoreductase chain 2</fullName>
        <ecNumber>7.1.1.2</ecNumber>
    </recommendedName>
    <alternativeName>
        <fullName>NADH dehydrogenase subunit 2</fullName>
    </alternativeName>
</protein>
<comment type="function">
    <text evidence="1">Core subunit of the mitochondrial membrane respiratory chain NADH dehydrogenase (Complex I) that is believed to belong to the minimal assembly required for catalysis. Complex I functions in the transfer of electrons from NADH to the respiratory chain. The immediate electron acceptor for the enzyme is believed to be ubiquinone (By similarity).</text>
</comment>
<comment type="catalytic activity">
    <reaction>
        <text>a ubiquinone + NADH + 5 H(+)(in) = a ubiquinol + NAD(+) + 4 H(+)(out)</text>
        <dbReference type="Rhea" id="RHEA:29091"/>
        <dbReference type="Rhea" id="RHEA-COMP:9565"/>
        <dbReference type="Rhea" id="RHEA-COMP:9566"/>
        <dbReference type="ChEBI" id="CHEBI:15378"/>
        <dbReference type="ChEBI" id="CHEBI:16389"/>
        <dbReference type="ChEBI" id="CHEBI:17976"/>
        <dbReference type="ChEBI" id="CHEBI:57540"/>
        <dbReference type="ChEBI" id="CHEBI:57945"/>
        <dbReference type="EC" id="7.1.1.2"/>
    </reaction>
</comment>
<comment type="subcellular location">
    <subcellularLocation>
        <location>Mitochondrion inner membrane</location>
        <topology>Multi-pass membrane protein</topology>
    </subcellularLocation>
</comment>
<comment type="similarity">
    <text evidence="3">Belongs to the complex I subunit 2 family.</text>
</comment>
<geneLocation type="mitochondrion"/>
<keyword id="KW-0249">Electron transport</keyword>
<keyword id="KW-0472">Membrane</keyword>
<keyword id="KW-0496">Mitochondrion</keyword>
<keyword id="KW-0999">Mitochondrion inner membrane</keyword>
<keyword id="KW-0520">NAD</keyword>
<keyword id="KW-1185">Reference proteome</keyword>
<keyword id="KW-0679">Respiratory chain</keyword>
<keyword id="KW-1278">Translocase</keyword>
<keyword id="KW-0812">Transmembrane</keyword>
<keyword id="KW-1133">Transmembrane helix</keyword>
<keyword id="KW-0813">Transport</keyword>
<keyword id="KW-0830">Ubiquinone</keyword>
<dbReference type="EC" id="7.1.1.2"/>
<dbReference type="EMBL" id="U82228">
    <property type="protein sequence ID" value="AAC60319.1"/>
    <property type="molecule type" value="Genomic_DNA"/>
</dbReference>
<dbReference type="PIR" id="B58892">
    <property type="entry name" value="B58892"/>
</dbReference>
<dbReference type="RefSeq" id="NP_008330.1">
    <property type="nucleotide sequence ID" value="NC_001804.1"/>
</dbReference>
<dbReference type="SMR" id="O03166"/>
<dbReference type="FunCoup" id="O03166">
    <property type="interactions" value="200"/>
</dbReference>
<dbReference type="STRING" id="7897.ENSLACP00000021806"/>
<dbReference type="Ensembl" id="ENSLACT00000024849.1">
    <property type="protein sequence ID" value="ENSLACP00000021806.1"/>
    <property type="gene ID" value="ENSLACG00000022065.1"/>
</dbReference>
<dbReference type="GeneID" id="808084"/>
<dbReference type="KEGG" id="lcm:808084"/>
<dbReference type="CTD" id="4536"/>
<dbReference type="eggNOG" id="KOG4668">
    <property type="taxonomic scope" value="Eukaryota"/>
</dbReference>
<dbReference type="GeneTree" id="ENSGT00730000111348"/>
<dbReference type="HOGENOM" id="CLU_007100_1_3_1"/>
<dbReference type="InParanoid" id="O03166"/>
<dbReference type="OMA" id="HFWVPEV"/>
<dbReference type="OrthoDB" id="4092844at2759"/>
<dbReference type="TreeFam" id="TF343996"/>
<dbReference type="Proteomes" id="UP000008672">
    <property type="component" value="Mitochondrion"/>
</dbReference>
<dbReference type="Bgee" id="ENSLACG00000022065">
    <property type="expression patterns" value="Expressed in pelvic fin and 6 other cell types or tissues"/>
</dbReference>
<dbReference type="GO" id="GO:0005743">
    <property type="term" value="C:mitochondrial inner membrane"/>
    <property type="evidence" value="ECO:0007669"/>
    <property type="project" value="UniProtKB-SubCell"/>
</dbReference>
<dbReference type="GO" id="GO:0008137">
    <property type="term" value="F:NADH dehydrogenase (ubiquinone) activity"/>
    <property type="evidence" value="ECO:0007669"/>
    <property type="project" value="UniProtKB-EC"/>
</dbReference>
<dbReference type="GO" id="GO:0006120">
    <property type="term" value="P:mitochondrial electron transport, NADH to ubiquinone"/>
    <property type="evidence" value="ECO:0007669"/>
    <property type="project" value="InterPro"/>
</dbReference>
<dbReference type="InterPro" id="IPR050175">
    <property type="entry name" value="Complex_I_Subunit_2"/>
</dbReference>
<dbReference type="InterPro" id="IPR010933">
    <property type="entry name" value="NADH_DH_su2_C"/>
</dbReference>
<dbReference type="InterPro" id="IPR003917">
    <property type="entry name" value="NADH_UbQ_OxRdtase_chain2"/>
</dbReference>
<dbReference type="InterPro" id="IPR001750">
    <property type="entry name" value="ND/Mrp_TM"/>
</dbReference>
<dbReference type="PANTHER" id="PTHR46552">
    <property type="entry name" value="NADH-UBIQUINONE OXIDOREDUCTASE CHAIN 2"/>
    <property type="match status" value="1"/>
</dbReference>
<dbReference type="PANTHER" id="PTHR46552:SF1">
    <property type="entry name" value="NADH-UBIQUINONE OXIDOREDUCTASE CHAIN 2"/>
    <property type="match status" value="1"/>
</dbReference>
<dbReference type="Pfam" id="PF06444">
    <property type="entry name" value="NADH_dehy_S2_C"/>
    <property type="match status" value="1"/>
</dbReference>
<dbReference type="Pfam" id="PF00361">
    <property type="entry name" value="Proton_antipo_M"/>
    <property type="match status" value="1"/>
</dbReference>
<dbReference type="PRINTS" id="PR01436">
    <property type="entry name" value="NADHDHGNASE2"/>
</dbReference>
<accession>O03166</accession>
<evidence type="ECO:0000250" key="1"/>
<evidence type="ECO:0000255" key="2"/>
<evidence type="ECO:0000305" key="3"/>
<name>NU2M_LATCH</name>
<feature type="chain" id="PRO_0000117599" description="NADH-ubiquinone oxidoreductase chain 2">
    <location>
        <begin position="1"/>
        <end position="348"/>
    </location>
</feature>
<feature type="transmembrane region" description="Helical" evidence="2">
    <location>
        <begin position="1"/>
        <end position="21"/>
    </location>
</feature>
<feature type="transmembrane region" description="Helical" evidence="2">
    <location>
        <begin position="25"/>
        <end position="45"/>
    </location>
</feature>
<feature type="transmembrane region" description="Helical" evidence="2">
    <location>
        <begin position="60"/>
        <end position="80"/>
    </location>
</feature>
<feature type="transmembrane region" description="Helical" evidence="2">
    <location>
        <begin position="93"/>
        <end position="115"/>
    </location>
</feature>
<feature type="transmembrane region" description="Helical" evidence="2">
    <location>
        <begin position="149"/>
        <end position="169"/>
    </location>
</feature>
<feature type="transmembrane region" description="Helical" evidence="2">
    <location>
        <begin position="177"/>
        <end position="197"/>
    </location>
</feature>
<feature type="transmembrane region" description="Helical" evidence="2">
    <location>
        <begin position="200"/>
        <end position="220"/>
    </location>
</feature>
<feature type="transmembrane region" description="Helical" evidence="2">
    <location>
        <begin position="239"/>
        <end position="259"/>
    </location>
</feature>
<feature type="transmembrane region" description="Helical" evidence="2">
    <location>
        <begin position="274"/>
        <end position="294"/>
    </location>
</feature>
<feature type="transmembrane region" description="Helical" evidence="2">
    <location>
        <begin position="326"/>
        <end position="346"/>
    </location>
</feature>
<gene>
    <name type="primary">MT-ND2</name>
    <name type="synonym">MTND2</name>
    <name type="synonym">NADH2</name>
    <name type="synonym">ND2</name>
</gene>
<reference key="1">
    <citation type="journal article" date="1997" name="Genetics">
        <title>The complete DNA sequence of the mitochondrial genome of a 'living fossil,' the coelacanth (Latimeria chalumnae).</title>
        <authorList>
            <person name="Zardoya R."/>
            <person name="Meyer A."/>
        </authorList>
    </citation>
    <scope>NUCLEOTIDE SEQUENCE [LARGE SCALE GENOMIC DNA]</scope>
</reference>
<organism>
    <name type="scientific">Latimeria chalumnae</name>
    <name type="common">Coelacanth</name>
    <dbReference type="NCBI Taxonomy" id="7897"/>
    <lineage>
        <taxon>Eukaryota</taxon>
        <taxon>Metazoa</taxon>
        <taxon>Chordata</taxon>
        <taxon>Craniata</taxon>
        <taxon>Vertebrata</taxon>
        <taxon>Euteleostomi</taxon>
        <taxon>Coelacanthiformes</taxon>
        <taxon>Coelacanthidae</taxon>
        <taxon>Latimeria</taxon>
    </lineage>
</organism>